<protein>
    <recommendedName>
        <fullName>1-aminocyclopropane-1-carboxylate synthase 9</fullName>
        <shortName>ACC synthase 9</shortName>
        <ecNumber>4.4.1.14</ecNumber>
    </recommendedName>
    <alternativeName>
        <fullName>Ethylene-overproduction protein 3</fullName>
    </alternativeName>
    <alternativeName>
        <fullName>S-adenosyl-L-methionine methylthioadenosine-lyase 9</fullName>
    </alternativeName>
</protein>
<accession>Q9M2Y8</accession>
<sequence length="470" mass="53170">MKQLSRKVTSNAHGQDSSYFLGWEEYEKNPYDEIKNPNGIIQMGLAENQLCFDLIETWLAKNPDAAGLKKDGQSIFKELALFQDYHGLPEFKKALAEFMEEIRGNRVTFDPSKIVLAAGSTSANETLMFCLAEPGDAFLLPTPYYPGFDRDLKWRTGAEIVPIHCSSSNGFQITESALQQAYQQAQKLDLKVKGVLVTNPSNPLGTMLTRRELNLLVDFITSKNIHLISDEIYSGTVFGFEQFVSVMDVLKDKNLENSEVSKRVHIVYSLSKDLGLPGFRVGAIYSNDEMVVSAATKMSSFGLVSSQTQYLLSALLSDKKFTSTYLDENQKRLKIRQKKLVSGLEAAGITCLKSNAGLFCWVDMRHLLDTNTFEAELELWKKIVYDVKLNISPGSSCHCTEPGWFRVCFANMSEDTLDLAMKRLKEYVESTDSRRVISKSSHDRIKSLRKRTVSNWVFRVSWTDRVPDER</sequence>
<organism>
    <name type="scientific">Arabidopsis thaliana</name>
    <name type="common">Mouse-ear cress</name>
    <dbReference type="NCBI Taxonomy" id="3702"/>
    <lineage>
        <taxon>Eukaryota</taxon>
        <taxon>Viridiplantae</taxon>
        <taxon>Streptophyta</taxon>
        <taxon>Embryophyta</taxon>
        <taxon>Tracheophyta</taxon>
        <taxon>Spermatophyta</taxon>
        <taxon>Magnoliopsida</taxon>
        <taxon>eudicotyledons</taxon>
        <taxon>Gunneridae</taxon>
        <taxon>Pentapetalae</taxon>
        <taxon>rosids</taxon>
        <taxon>malvids</taxon>
        <taxon>Brassicales</taxon>
        <taxon>Brassicaceae</taxon>
        <taxon>Camelineae</taxon>
        <taxon>Arabidopsis</taxon>
    </lineage>
</organism>
<evidence type="ECO:0000250" key="1"/>
<evidence type="ECO:0000269" key="2">
    <source>
    </source>
</evidence>
<evidence type="ECO:0000269" key="3">
    <source>
    </source>
</evidence>
<evidence type="ECO:0000269" key="4">
    <source>
    </source>
</evidence>
<evidence type="ECO:0000305" key="5"/>
<feature type="chain" id="PRO_0000123903" description="1-aminocyclopropane-1-carboxylate synthase 9">
    <location>
        <begin position="1"/>
        <end position="470"/>
    </location>
</feature>
<feature type="binding site" evidence="1">
    <location>
        <position position="47"/>
    </location>
    <ligand>
        <name>substrate</name>
    </ligand>
</feature>
<feature type="binding site" evidence="1">
    <location>
        <position position="85"/>
    </location>
    <ligand>
        <name>substrate</name>
    </ligand>
</feature>
<feature type="modified residue" description="N6-(pyridoxal phosphate)lysine" evidence="1">
    <location>
        <position position="272"/>
    </location>
</feature>
<feature type="mutagenesis site" description="In eto3; increases its stability heading to ethylene overproduction. Impairs the binding to ETO1 and slightly affects the binding to EOL1." evidence="3">
    <original>V</original>
    <variation>D</variation>
    <location>
        <position position="457"/>
    </location>
</feature>
<gene>
    <name type="primary">ACS9</name>
    <name type="synonym">ETO3</name>
    <name type="ordered locus">At3g49700</name>
    <name type="ORF">T16K5.50</name>
</gene>
<dbReference type="EC" id="4.4.1.14"/>
<dbReference type="EMBL" id="AL132965">
    <property type="protein sequence ID" value="CAB66908.1"/>
    <property type="molecule type" value="Genomic_DNA"/>
</dbReference>
<dbReference type="EMBL" id="CP002686">
    <property type="protein sequence ID" value="AEE78578.1"/>
    <property type="molecule type" value="Genomic_DNA"/>
</dbReference>
<dbReference type="EMBL" id="AF332391">
    <property type="protein sequence ID" value="AAG48755.1"/>
    <property type="molecule type" value="mRNA"/>
</dbReference>
<dbReference type="PIR" id="T46036">
    <property type="entry name" value="T46036"/>
</dbReference>
<dbReference type="RefSeq" id="NP_190539.1">
    <property type="nucleotide sequence ID" value="NM_114830.2"/>
</dbReference>
<dbReference type="SMR" id="Q9M2Y8"/>
<dbReference type="BioGRID" id="9450">
    <property type="interactions" value="2"/>
</dbReference>
<dbReference type="FunCoup" id="Q9M2Y8">
    <property type="interactions" value="282"/>
</dbReference>
<dbReference type="STRING" id="3702.Q9M2Y8"/>
<dbReference type="iPTMnet" id="Q9M2Y8"/>
<dbReference type="PaxDb" id="3702-AT3G49700.1"/>
<dbReference type="EnsemblPlants" id="AT3G49700.1">
    <property type="protein sequence ID" value="AT3G49700.1"/>
    <property type="gene ID" value="AT3G49700"/>
</dbReference>
<dbReference type="GeneID" id="824132"/>
<dbReference type="Gramene" id="AT3G49700.1">
    <property type="protein sequence ID" value="AT3G49700.1"/>
    <property type="gene ID" value="AT3G49700"/>
</dbReference>
<dbReference type="KEGG" id="ath:AT3G49700"/>
<dbReference type="Araport" id="AT3G49700"/>
<dbReference type="TAIR" id="AT3G49700">
    <property type="gene designation" value="ACS9"/>
</dbReference>
<dbReference type="eggNOG" id="KOG0256">
    <property type="taxonomic scope" value="Eukaryota"/>
</dbReference>
<dbReference type="HOGENOM" id="CLU_017584_1_0_1"/>
<dbReference type="InParanoid" id="Q9M2Y8"/>
<dbReference type="OMA" id="TGWYRIT"/>
<dbReference type="OrthoDB" id="1034112at2759"/>
<dbReference type="PhylomeDB" id="Q9M2Y8"/>
<dbReference type="SABIO-RK" id="Q9M2Y8"/>
<dbReference type="UniPathway" id="UPA00384">
    <property type="reaction ID" value="UER00562"/>
</dbReference>
<dbReference type="PRO" id="PR:Q9M2Y8"/>
<dbReference type="Proteomes" id="UP000006548">
    <property type="component" value="Chromosome 3"/>
</dbReference>
<dbReference type="ExpressionAtlas" id="Q9M2Y8">
    <property type="expression patterns" value="baseline and differential"/>
</dbReference>
<dbReference type="GO" id="GO:0016847">
    <property type="term" value="F:1-aminocyclopropane-1-carboxylate synthase activity"/>
    <property type="evidence" value="ECO:0000314"/>
    <property type="project" value="TAIR"/>
</dbReference>
<dbReference type="GO" id="GO:0030170">
    <property type="term" value="F:pyridoxal phosphate binding"/>
    <property type="evidence" value="ECO:0007669"/>
    <property type="project" value="InterPro"/>
</dbReference>
<dbReference type="GO" id="GO:0009693">
    <property type="term" value="P:ethylene biosynthetic process"/>
    <property type="evidence" value="ECO:0000315"/>
    <property type="project" value="TAIR"/>
</dbReference>
<dbReference type="GO" id="GO:0009835">
    <property type="term" value="P:fruit ripening"/>
    <property type="evidence" value="ECO:0007669"/>
    <property type="project" value="UniProtKB-KW"/>
</dbReference>
<dbReference type="GO" id="GO:0006417">
    <property type="term" value="P:regulation of translation"/>
    <property type="evidence" value="ECO:0000314"/>
    <property type="project" value="TAIR"/>
</dbReference>
<dbReference type="CDD" id="cd00609">
    <property type="entry name" value="AAT_like"/>
    <property type="match status" value="1"/>
</dbReference>
<dbReference type="FunFam" id="3.90.1150.10:FF:000038">
    <property type="entry name" value="1-aminocyclopropane-1-carboxylate synthase 2"/>
    <property type="match status" value="1"/>
</dbReference>
<dbReference type="FunFam" id="3.40.640.10:FF:000051">
    <property type="entry name" value="1-aminocyclopropane-1-carboxylate synthase 3"/>
    <property type="match status" value="1"/>
</dbReference>
<dbReference type="Gene3D" id="3.90.1150.10">
    <property type="entry name" value="Aspartate Aminotransferase, domain 1"/>
    <property type="match status" value="1"/>
</dbReference>
<dbReference type="Gene3D" id="3.40.640.10">
    <property type="entry name" value="Type I PLP-dependent aspartate aminotransferase-like (Major domain)"/>
    <property type="match status" value="1"/>
</dbReference>
<dbReference type="InterPro" id="IPR004839">
    <property type="entry name" value="Aminotransferase_I/II_large"/>
</dbReference>
<dbReference type="InterPro" id="IPR050478">
    <property type="entry name" value="Ethylene_sulfur-biosynth"/>
</dbReference>
<dbReference type="InterPro" id="IPR004838">
    <property type="entry name" value="NHTrfase_class1_PyrdxlP-BS"/>
</dbReference>
<dbReference type="InterPro" id="IPR015424">
    <property type="entry name" value="PyrdxlP-dep_Trfase"/>
</dbReference>
<dbReference type="InterPro" id="IPR015421">
    <property type="entry name" value="PyrdxlP-dep_Trfase_major"/>
</dbReference>
<dbReference type="InterPro" id="IPR015422">
    <property type="entry name" value="PyrdxlP-dep_Trfase_small"/>
</dbReference>
<dbReference type="PANTHER" id="PTHR43795:SF10">
    <property type="entry name" value="1-AMINOCYCLOPROPANE-1-CARBOXYLATE SYNTHASE 9"/>
    <property type="match status" value="1"/>
</dbReference>
<dbReference type="PANTHER" id="PTHR43795">
    <property type="entry name" value="BIFUNCTIONAL ASPARTATE AMINOTRANSFERASE AND GLUTAMATE/ASPARTATE-PREPHENATE AMINOTRANSFERASE-RELATED"/>
    <property type="match status" value="1"/>
</dbReference>
<dbReference type="Pfam" id="PF00155">
    <property type="entry name" value="Aminotran_1_2"/>
    <property type="match status" value="1"/>
</dbReference>
<dbReference type="PRINTS" id="PR00753">
    <property type="entry name" value="ACCSYNTHASE"/>
</dbReference>
<dbReference type="SUPFAM" id="SSF53383">
    <property type="entry name" value="PLP-dependent transferases"/>
    <property type="match status" value="1"/>
</dbReference>
<dbReference type="PROSITE" id="PS00105">
    <property type="entry name" value="AA_TRANSFER_CLASS_1"/>
    <property type="match status" value="1"/>
</dbReference>
<comment type="function">
    <text>1-aminocyclopropane-1-carboxylate synthase (ACS) enzymes catalyze the conversion of S-adenosyl-L-methionine (SAM) into 1-aminocyclopropane-1-carboxylate (ACC), a direct precursor of ethylene.</text>
</comment>
<comment type="catalytic activity">
    <reaction evidence="2">
        <text>S-adenosyl-L-methionine = 1-aminocyclopropane-1-carboxylate + S-methyl-5'-thioadenosine + H(+)</text>
        <dbReference type="Rhea" id="RHEA:21744"/>
        <dbReference type="ChEBI" id="CHEBI:15378"/>
        <dbReference type="ChEBI" id="CHEBI:17509"/>
        <dbReference type="ChEBI" id="CHEBI:58360"/>
        <dbReference type="ChEBI" id="CHEBI:59789"/>
        <dbReference type="EC" id="4.4.1.14"/>
    </reaction>
</comment>
<comment type="cofactor">
    <cofactor>
        <name>pyridoxal 5'-phosphate</name>
        <dbReference type="ChEBI" id="CHEBI:597326"/>
    </cofactor>
</comment>
<comment type="biophysicochemical properties">
    <kinetics>
        <KM>40 uM for AdoMet</KM>
        <Vmax>324.5 uM/h/mg enzyme</Vmax>
    </kinetics>
    <phDependence>
        <text>Optimum pH is 8.</text>
    </phDependence>
</comment>
<comment type="pathway">
    <text>Alkene biosynthesis; ethylene biosynthesis via S-adenosyl-L-methionine; ethylene from S-adenosyl-L-methionine: step 1/2.</text>
</comment>
<comment type="subunit">
    <text evidence="1 3 4">Homodimer and heterodimer. In vivo, the relevance of heterodimerization with other ACS enzymes is however unsure (By similarity). Interacts (via its C-terminal region) with FEI1, FEI2, ETO1 and EOL1.</text>
</comment>
<comment type="tissue specificity">
    <text evidence="2">Expressed in roots and siliques.</text>
</comment>
<comment type="induction">
    <text evidence="2">By cycloheximide (CHX).</text>
</comment>
<comment type="PTM">
    <text>May be processed at its C-terminus.</text>
</comment>
<comment type="miscellaneous">
    <text>The stability of ACS proteins, and the regulation of such stability, play a central role in ethylene biosynthesis.</text>
</comment>
<comment type="similarity">
    <text evidence="5">Belongs to the class-I pyridoxal-phosphate-dependent aminotransferase family.</text>
</comment>
<reference key="1">
    <citation type="journal article" date="2000" name="Nature">
        <title>Sequence and analysis of chromosome 3 of the plant Arabidopsis thaliana.</title>
        <authorList>
            <person name="Salanoubat M."/>
            <person name="Lemcke K."/>
            <person name="Rieger M."/>
            <person name="Ansorge W."/>
            <person name="Unseld M."/>
            <person name="Fartmann B."/>
            <person name="Valle G."/>
            <person name="Bloecker H."/>
            <person name="Perez-Alonso M."/>
            <person name="Obermaier B."/>
            <person name="Delseny M."/>
            <person name="Boutry M."/>
            <person name="Grivell L.A."/>
            <person name="Mache R."/>
            <person name="Puigdomenech P."/>
            <person name="De Simone V."/>
            <person name="Choisne N."/>
            <person name="Artiguenave F."/>
            <person name="Robert C."/>
            <person name="Brottier P."/>
            <person name="Wincker P."/>
            <person name="Cattolico L."/>
            <person name="Weissenbach J."/>
            <person name="Saurin W."/>
            <person name="Quetier F."/>
            <person name="Schaefer M."/>
            <person name="Mueller-Auer S."/>
            <person name="Gabel C."/>
            <person name="Fuchs M."/>
            <person name="Benes V."/>
            <person name="Wurmbach E."/>
            <person name="Drzonek H."/>
            <person name="Erfle H."/>
            <person name="Jordan N."/>
            <person name="Bangert S."/>
            <person name="Wiedelmann R."/>
            <person name="Kranz H."/>
            <person name="Voss H."/>
            <person name="Holland R."/>
            <person name="Brandt P."/>
            <person name="Nyakatura G."/>
            <person name="Vezzi A."/>
            <person name="D'Angelo M."/>
            <person name="Pallavicini A."/>
            <person name="Toppo S."/>
            <person name="Simionati B."/>
            <person name="Conrad A."/>
            <person name="Hornischer K."/>
            <person name="Kauer G."/>
            <person name="Loehnert T.-H."/>
            <person name="Nordsiek G."/>
            <person name="Reichelt J."/>
            <person name="Scharfe M."/>
            <person name="Schoen O."/>
            <person name="Bargues M."/>
            <person name="Terol J."/>
            <person name="Climent J."/>
            <person name="Navarro P."/>
            <person name="Collado C."/>
            <person name="Perez-Perez A."/>
            <person name="Ottenwaelder B."/>
            <person name="Duchemin D."/>
            <person name="Cooke R."/>
            <person name="Laudie M."/>
            <person name="Berger-Llauro C."/>
            <person name="Purnelle B."/>
            <person name="Masuy D."/>
            <person name="de Haan M."/>
            <person name="Maarse A.C."/>
            <person name="Alcaraz J.-P."/>
            <person name="Cottet A."/>
            <person name="Casacuberta E."/>
            <person name="Monfort A."/>
            <person name="Argiriou A."/>
            <person name="Flores M."/>
            <person name="Liguori R."/>
            <person name="Vitale D."/>
            <person name="Mannhaupt G."/>
            <person name="Haase D."/>
            <person name="Schoof H."/>
            <person name="Rudd S."/>
            <person name="Zaccaria P."/>
            <person name="Mewes H.-W."/>
            <person name="Mayer K.F.X."/>
            <person name="Kaul S."/>
            <person name="Town C.D."/>
            <person name="Koo H.L."/>
            <person name="Tallon L.J."/>
            <person name="Jenkins J."/>
            <person name="Rooney T."/>
            <person name="Rizzo M."/>
            <person name="Walts A."/>
            <person name="Utterback T."/>
            <person name="Fujii C.Y."/>
            <person name="Shea T.P."/>
            <person name="Creasy T.H."/>
            <person name="Haas B."/>
            <person name="Maiti R."/>
            <person name="Wu D."/>
            <person name="Peterson J."/>
            <person name="Van Aken S."/>
            <person name="Pai G."/>
            <person name="Militscher J."/>
            <person name="Sellers P."/>
            <person name="Gill J.E."/>
            <person name="Feldblyum T.V."/>
            <person name="Preuss D."/>
            <person name="Lin X."/>
            <person name="Nierman W.C."/>
            <person name="Salzberg S.L."/>
            <person name="White O."/>
            <person name="Venter J.C."/>
            <person name="Fraser C.M."/>
            <person name="Kaneko T."/>
            <person name="Nakamura Y."/>
            <person name="Sato S."/>
            <person name="Kato T."/>
            <person name="Asamizu E."/>
            <person name="Sasamoto S."/>
            <person name="Kimura T."/>
            <person name="Idesawa K."/>
            <person name="Kawashima K."/>
            <person name="Kishida Y."/>
            <person name="Kiyokawa C."/>
            <person name="Kohara M."/>
            <person name="Matsumoto M."/>
            <person name="Matsuno A."/>
            <person name="Muraki A."/>
            <person name="Nakayama S."/>
            <person name="Nakazaki N."/>
            <person name="Shinpo S."/>
            <person name="Takeuchi C."/>
            <person name="Wada T."/>
            <person name="Watanabe A."/>
            <person name="Yamada M."/>
            <person name="Yasuda M."/>
            <person name="Tabata S."/>
        </authorList>
    </citation>
    <scope>NUCLEOTIDE SEQUENCE [LARGE SCALE GENOMIC DNA]</scope>
    <source>
        <strain>cv. Columbia</strain>
    </source>
</reference>
<reference key="2">
    <citation type="journal article" date="2017" name="Plant J.">
        <title>Araport11: a complete reannotation of the Arabidopsis thaliana reference genome.</title>
        <authorList>
            <person name="Cheng C.Y."/>
            <person name="Krishnakumar V."/>
            <person name="Chan A.P."/>
            <person name="Thibaud-Nissen F."/>
            <person name="Schobel S."/>
            <person name="Town C.D."/>
        </authorList>
    </citation>
    <scope>GENOME REANNOTATION</scope>
    <source>
        <strain>cv. Columbia</strain>
    </source>
</reference>
<reference key="3">
    <citation type="journal article" date="2003" name="Science">
        <title>Empirical analysis of transcriptional activity in the Arabidopsis genome.</title>
        <authorList>
            <person name="Yamada K."/>
            <person name="Lim J."/>
            <person name="Dale J.M."/>
            <person name="Chen H."/>
            <person name="Shinn P."/>
            <person name="Palm C.J."/>
            <person name="Southwick A.M."/>
            <person name="Wu H.C."/>
            <person name="Kim C.J."/>
            <person name="Nguyen M."/>
            <person name="Pham P.K."/>
            <person name="Cheuk R.F."/>
            <person name="Karlin-Newmann G."/>
            <person name="Liu S.X."/>
            <person name="Lam B."/>
            <person name="Sakano H."/>
            <person name="Wu T."/>
            <person name="Yu G."/>
            <person name="Miranda M."/>
            <person name="Quach H.L."/>
            <person name="Tripp M."/>
            <person name="Chang C.H."/>
            <person name="Lee J.M."/>
            <person name="Toriumi M.J."/>
            <person name="Chan M.M."/>
            <person name="Tang C.C."/>
            <person name="Onodera C.S."/>
            <person name="Deng J.M."/>
            <person name="Akiyama K."/>
            <person name="Ansari Y."/>
            <person name="Arakawa T."/>
            <person name="Banh J."/>
            <person name="Banno F."/>
            <person name="Bowser L."/>
            <person name="Brooks S.Y."/>
            <person name="Carninci P."/>
            <person name="Chao Q."/>
            <person name="Choy N."/>
            <person name="Enju A."/>
            <person name="Goldsmith A.D."/>
            <person name="Gurjal M."/>
            <person name="Hansen N.F."/>
            <person name="Hayashizaki Y."/>
            <person name="Johnson-Hopson C."/>
            <person name="Hsuan V.W."/>
            <person name="Iida K."/>
            <person name="Karnes M."/>
            <person name="Khan S."/>
            <person name="Koesema E."/>
            <person name="Ishida J."/>
            <person name="Jiang P.X."/>
            <person name="Jones T."/>
            <person name="Kawai J."/>
            <person name="Kamiya A."/>
            <person name="Meyers C."/>
            <person name="Nakajima M."/>
            <person name="Narusaka M."/>
            <person name="Seki M."/>
            <person name="Sakurai T."/>
            <person name="Satou M."/>
            <person name="Tamse R."/>
            <person name="Vaysberg M."/>
            <person name="Wallender E.K."/>
            <person name="Wong C."/>
            <person name="Yamamura Y."/>
            <person name="Yuan S."/>
            <person name="Shinozaki K."/>
            <person name="Davis R.W."/>
            <person name="Theologis A."/>
            <person name="Ecker J.R."/>
        </authorList>
    </citation>
    <scope>NUCLEOTIDE SEQUENCE [LARGE SCALE MRNA]</scope>
    <source>
        <strain>cv. Columbia</strain>
    </source>
</reference>
<reference key="4">
    <citation type="journal article" date="2003" name="Plant Cell">
        <title>The eto1, eto2, and eto3 mutations and cytokinin treatment increase ethylene biosynthesis in Arabidopsis by increasing the stability of ACS protein.</title>
        <authorList>
            <person name="Chae H.S."/>
            <person name="Faure F."/>
            <person name="Kieber J.J."/>
        </authorList>
    </citation>
    <scope>MUTANT ETO3</scope>
</reference>
<reference key="5">
    <citation type="journal article" date="2003" name="J. Biol. Chem.">
        <title>Biochemical diversity among the 1-amino-cyclopropane-1-carboxylate synthase isozymes encoded by the Arabidopsis gene family.</title>
        <authorList>
            <person name="Yamagami T."/>
            <person name="Tsuchisaka A."/>
            <person name="Yamada K."/>
            <person name="Haddon W.F."/>
            <person name="Harden L.A."/>
            <person name="Theologis A."/>
        </authorList>
    </citation>
    <scope>ENZYME ACTIVITY</scope>
    <scope>TISSUE SPECIFICITY</scope>
    <scope>INDUCTION</scope>
    <scope>PUTATIVE PROTEOLYTIC PROCESSING</scope>
</reference>
<reference key="6">
    <citation type="journal article" date="2008" name="Plant Cell">
        <title>Two leucine-rich repeat receptor kinases mediate signaling, linking cell wall biosynthesis and ACC synthase in Arabidopsis.</title>
        <authorList>
            <person name="Xu S.-L."/>
            <person name="Rahman A."/>
            <person name="Baskin T.I."/>
            <person name="Kieber J.J."/>
        </authorList>
    </citation>
    <scope>INTERACTION WITH FEI1 AND FEI2</scope>
</reference>
<reference key="7">
    <citation type="journal article" date="2009" name="Plant J.">
        <title>The BTB ubiquitin ligases ETO1, EOL1 and EOL2 act collectively to regulate ethylene biosynthesis in Arabidopsis by controlling type-2 ACC synthase levels.</title>
        <authorList>
            <person name="Christians M.J."/>
            <person name="Gingerich D.J."/>
            <person name="Hansen M."/>
            <person name="Binder B.M."/>
            <person name="Kieber J.J."/>
            <person name="Vierstra R.D."/>
        </authorList>
    </citation>
    <scope>INTERACTION WITH ETO1 AND EOL1</scope>
    <scope>MUTAGENESIS OF VAL-457</scope>
</reference>
<keyword id="KW-0266">Ethylene biosynthesis</keyword>
<keyword id="KW-0292">Fruit ripening</keyword>
<keyword id="KW-0456">Lyase</keyword>
<keyword id="KW-0663">Pyridoxal phosphate</keyword>
<keyword id="KW-1185">Reference proteome</keyword>
<keyword id="KW-0949">S-adenosyl-L-methionine</keyword>
<proteinExistence type="evidence at protein level"/>
<name>1A19_ARATH</name>